<reference key="1">
    <citation type="journal article" date="2001" name="Science">
        <title>Comparative genomics of Listeria species.</title>
        <authorList>
            <person name="Glaser P."/>
            <person name="Frangeul L."/>
            <person name="Buchrieser C."/>
            <person name="Rusniok C."/>
            <person name="Amend A."/>
            <person name="Baquero F."/>
            <person name="Berche P."/>
            <person name="Bloecker H."/>
            <person name="Brandt P."/>
            <person name="Chakraborty T."/>
            <person name="Charbit A."/>
            <person name="Chetouani F."/>
            <person name="Couve E."/>
            <person name="de Daruvar A."/>
            <person name="Dehoux P."/>
            <person name="Domann E."/>
            <person name="Dominguez-Bernal G."/>
            <person name="Duchaud E."/>
            <person name="Durant L."/>
            <person name="Dussurget O."/>
            <person name="Entian K.-D."/>
            <person name="Fsihi H."/>
            <person name="Garcia-del Portillo F."/>
            <person name="Garrido P."/>
            <person name="Gautier L."/>
            <person name="Goebel W."/>
            <person name="Gomez-Lopez N."/>
            <person name="Hain T."/>
            <person name="Hauf J."/>
            <person name="Jackson D."/>
            <person name="Jones L.-M."/>
            <person name="Kaerst U."/>
            <person name="Kreft J."/>
            <person name="Kuhn M."/>
            <person name="Kunst F."/>
            <person name="Kurapkat G."/>
            <person name="Madueno E."/>
            <person name="Maitournam A."/>
            <person name="Mata Vicente J."/>
            <person name="Ng E."/>
            <person name="Nedjari H."/>
            <person name="Nordsiek G."/>
            <person name="Novella S."/>
            <person name="de Pablos B."/>
            <person name="Perez-Diaz J.-C."/>
            <person name="Purcell R."/>
            <person name="Remmel B."/>
            <person name="Rose M."/>
            <person name="Schlueter T."/>
            <person name="Simoes N."/>
            <person name="Tierrez A."/>
            <person name="Vazquez-Boland J.-A."/>
            <person name="Voss H."/>
            <person name="Wehland J."/>
            <person name="Cossart P."/>
        </authorList>
    </citation>
    <scope>NUCLEOTIDE SEQUENCE [LARGE SCALE GENOMIC DNA]</scope>
    <source>
        <strain>ATCC BAA-679 / EGD-e</strain>
    </source>
</reference>
<accession>Q8Y9G3</accession>
<feature type="chain" id="PRO_0000152391" description="Imidazole glycerol phosphate synthase subunit HisH">
    <location>
        <begin position="1"/>
        <end position="208"/>
    </location>
</feature>
<feature type="domain" description="Glutamine amidotransferase type-1" evidence="1">
    <location>
        <begin position="1"/>
        <end position="206"/>
    </location>
</feature>
<feature type="active site" description="Nucleophile" evidence="1">
    <location>
        <position position="79"/>
    </location>
</feature>
<feature type="active site" evidence="1">
    <location>
        <position position="181"/>
    </location>
</feature>
<feature type="active site" evidence="1">
    <location>
        <position position="183"/>
    </location>
</feature>
<proteinExistence type="inferred from homology"/>
<name>HIS5_LISMO</name>
<keyword id="KW-0028">Amino-acid biosynthesis</keyword>
<keyword id="KW-0963">Cytoplasm</keyword>
<keyword id="KW-0315">Glutamine amidotransferase</keyword>
<keyword id="KW-0368">Histidine biosynthesis</keyword>
<keyword id="KW-0378">Hydrolase</keyword>
<keyword id="KW-0456">Lyase</keyword>
<keyword id="KW-1185">Reference proteome</keyword>
<organism>
    <name type="scientific">Listeria monocytogenes serovar 1/2a (strain ATCC BAA-679 / EGD-e)</name>
    <dbReference type="NCBI Taxonomy" id="169963"/>
    <lineage>
        <taxon>Bacteria</taxon>
        <taxon>Bacillati</taxon>
        <taxon>Bacillota</taxon>
        <taxon>Bacilli</taxon>
        <taxon>Bacillales</taxon>
        <taxon>Listeriaceae</taxon>
        <taxon>Listeria</taxon>
    </lineage>
</organism>
<sequence length="208" mass="22742">MIVIIDYDTGNTKSISKALDFIGLQNKISSDATEISQADGVILPGVGAYPEAMKELTRRGLNKTLKEIAAGGKPILGVCLGMQLLLESSNEHSFTNGLGLIPGHVEKLPEDPEFAVPHMGWNQLQIKRATPLTKQLDGEYVYYVHSYYANCPEEYIIATSGYSIEVPGMINKGNIYGAQFHPEKSGQIGLEILKGFKEVTYSCKSSQQ</sequence>
<evidence type="ECO:0000255" key="1">
    <source>
        <dbReference type="HAMAP-Rule" id="MF_00278"/>
    </source>
</evidence>
<gene>
    <name evidence="1" type="primary">hisH</name>
    <name type="ordered locus">lmo0565</name>
</gene>
<protein>
    <recommendedName>
        <fullName evidence="1">Imidazole glycerol phosphate synthase subunit HisH</fullName>
        <ecNumber evidence="1">4.3.2.10</ecNumber>
    </recommendedName>
    <alternativeName>
        <fullName evidence="1">IGP synthase glutaminase subunit</fullName>
        <ecNumber evidence="1">3.5.1.2</ecNumber>
    </alternativeName>
    <alternativeName>
        <fullName evidence="1">IGP synthase subunit HisH</fullName>
    </alternativeName>
    <alternativeName>
        <fullName evidence="1">ImGP synthase subunit HisH</fullName>
        <shortName evidence="1">IGPS subunit HisH</shortName>
    </alternativeName>
</protein>
<comment type="function">
    <text evidence="1">IGPS catalyzes the conversion of PRFAR and glutamine to IGP, AICAR and glutamate. The HisH subunit catalyzes the hydrolysis of glutamine to glutamate and ammonia as part of the synthesis of IGP and AICAR. The resulting ammonia molecule is channeled to the active site of HisF.</text>
</comment>
<comment type="catalytic activity">
    <reaction evidence="1">
        <text>5-[(5-phospho-1-deoxy-D-ribulos-1-ylimino)methylamino]-1-(5-phospho-beta-D-ribosyl)imidazole-4-carboxamide + L-glutamine = D-erythro-1-(imidazol-4-yl)glycerol 3-phosphate + 5-amino-1-(5-phospho-beta-D-ribosyl)imidazole-4-carboxamide + L-glutamate + H(+)</text>
        <dbReference type="Rhea" id="RHEA:24793"/>
        <dbReference type="ChEBI" id="CHEBI:15378"/>
        <dbReference type="ChEBI" id="CHEBI:29985"/>
        <dbReference type="ChEBI" id="CHEBI:58278"/>
        <dbReference type="ChEBI" id="CHEBI:58359"/>
        <dbReference type="ChEBI" id="CHEBI:58475"/>
        <dbReference type="ChEBI" id="CHEBI:58525"/>
        <dbReference type="EC" id="4.3.2.10"/>
    </reaction>
</comment>
<comment type="catalytic activity">
    <reaction evidence="1">
        <text>L-glutamine + H2O = L-glutamate + NH4(+)</text>
        <dbReference type="Rhea" id="RHEA:15889"/>
        <dbReference type="ChEBI" id="CHEBI:15377"/>
        <dbReference type="ChEBI" id="CHEBI:28938"/>
        <dbReference type="ChEBI" id="CHEBI:29985"/>
        <dbReference type="ChEBI" id="CHEBI:58359"/>
        <dbReference type="EC" id="3.5.1.2"/>
    </reaction>
</comment>
<comment type="pathway">
    <text evidence="1">Amino-acid biosynthesis; L-histidine biosynthesis; L-histidine from 5-phospho-alpha-D-ribose 1-diphosphate: step 5/9.</text>
</comment>
<comment type="subunit">
    <text evidence="1">Heterodimer of HisH and HisF.</text>
</comment>
<comment type="subcellular location">
    <subcellularLocation>
        <location evidence="1">Cytoplasm</location>
    </subcellularLocation>
</comment>
<dbReference type="EC" id="4.3.2.10" evidence="1"/>
<dbReference type="EC" id="3.5.1.2" evidence="1"/>
<dbReference type="EMBL" id="AL591975">
    <property type="protein sequence ID" value="CAC98644.1"/>
    <property type="molecule type" value="Genomic_DNA"/>
</dbReference>
<dbReference type="PIR" id="AF1145">
    <property type="entry name" value="AF1145"/>
</dbReference>
<dbReference type="RefSeq" id="NP_464093.1">
    <property type="nucleotide sequence ID" value="NC_003210.1"/>
</dbReference>
<dbReference type="RefSeq" id="WP_009930737.1">
    <property type="nucleotide sequence ID" value="NZ_CP149495.1"/>
</dbReference>
<dbReference type="SMR" id="Q8Y9G3"/>
<dbReference type="STRING" id="169963.gene:17593216"/>
<dbReference type="PaxDb" id="169963-lmo0565"/>
<dbReference type="EnsemblBacteria" id="CAC98644">
    <property type="protein sequence ID" value="CAC98644"/>
    <property type="gene ID" value="CAC98644"/>
</dbReference>
<dbReference type="GeneID" id="984852"/>
<dbReference type="KEGG" id="lmo:lmo0565"/>
<dbReference type="PATRIC" id="fig|169963.11.peg.584"/>
<dbReference type="eggNOG" id="COG0118">
    <property type="taxonomic scope" value="Bacteria"/>
</dbReference>
<dbReference type="HOGENOM" id="CLU_071837_2_2_9"/>
<dbReference type="OrthoDB" id="9807137at2"/>
<dbReference type="PhylomeDB" id="Q8Y9G3"/>
<dbReference type="BioCyc" id="LMON169963:LMO0565-MONOMER"/>
<dbReference type="UniPathway" id="UPA00031">
    <property type="reaction ID" value="UER00010"/>
</dbReference>
<dbReference type="Proteomes" id="UP000000817">
    <property type="component" value="Chromosome"/>
</dbReference>
<dbReference type="GO" id="GO:0005737">
    <property type="term" value="C:cytoplasm"/>
    <property type="evidence" value="ECO:0007669"/>
    <property type="project" value="UniProtKB-SubCell"/>
</dbReference>
<dbReference type="GO" id="GO:0004359">
    <property type="term" value="F:glutaminase activity"/>
    <property type="evidence" value="ECO:0007669"/>
    <property type="project" value="UniProtKB-EC"/>
</dbReference>
<dbReference type="GO" id="GO:0000107">
    <property type="term" value="F:imidazoleglycerol-phosphate synthase activity"/>
    <property type="evidence" value="ECO:0000318"/>
    <property type="project" value="GO_Central"/>
</dbReference>
<dbReference type="GO" id="GO:0016829">
    <property type="term" value="F:lyase activity"/>
    <property type="evidence" value="ECO:0007669"/>
    <property type="project" value="UniProtKB-KW"/>
</dbReference>
<dbReference type="GO" id="GO:0000105">
    <property type="term" value="P:L-histidine biosynthetic process"/>
    <property type="evidence" value="ECO:0007669"/>
    <property type="project" value="UniProtKB-UniRule"/>
</dbReference>
<dbReference type="CDD" id="cd01748">
    <property type="entry name" value="GATase1_IGP_Synthase"/>
    <property type="match status" value="1"/>
</dbReference>
<dbReference type="FunFam" id="3.40.50.880:FF:000028">
    <property type="entry name" value="Imidazole glycerol phosphate synthase subunit HisH"/>
    <property type="match status" value="1"/>
</dbReference>
<dbReference type="Gene3D" id="3.40.50.880">
    <property type="match status" value="1"/>
</dbReference>
<dbReference type="HAMAP" id="MF_00278">
    <property type="entry name" value="HisH"/>
    <property type="match status" value="1"/>
</dbReference>
<dbReference type="InterPro" id="IPR029062">
    <property type="entry name" value="Class_I_gatase-like"/>
</dbReference>
<dbReference type="InterPro" id="IPR017926">
    <property type="entry name" value="GATASE"/>
</dbReference>
<dbReference type="InterPro" id="IPR010139">
    <property type="entry name" value="Imidazole-glycPsynth_HisH"/>
</dbReference>
<dbReference type="NCBIfam" id="TIGR01855">
    <property type="entry name" value="IMP_synth_hisH"/>
    <property type="match status" value="1"/>
</dbReference>
<dbReference type="PANTHER" id="PTHR42701">
    <property type="entry name" value="IMIDAZOLE GLYCEROL PHOSPHATE SYNTHASE SUBUNIT HISH"/>
    <property type="match status" value="1"/>
</dbReference>
<dbReference type="PANTHER" id="PTHR42701:SF1">
    <property type="entry name" value="IMIDAZOLE GLYCEROL PHOSPHATE SYNTHASE SUBUNIT HISH"/>
    <property type="match status" value="1"/>
</dbReference>
<dbReference type="Pfam" id="PF00117">
    <property type="entry name" value="GATase"/>
    <property type="match status" value="1"/>
</dbReference>
<dbReference type="PIRSF" id="PIRSF000495">
    <property type="entry name" value="Amidotransf_hisH"/>
    <property type="match status" value="1"/>
</dbReference>
<dbReference type="SUPFAM" id="SSF52317">
    <property type="entry name" value="Class I glutamine amidotransferase-like"/>
    <property type="match status" value="1"/>
</dbReference>
<dbReference type="PROSITE" id="PS51273">
    <property type="entry name" value="GATASE_TYPE_1"/>
    <property type="match status" value="1"/>
</dbReference>